<comment type="function">
    <text evidence="1">Chemotactic activity for lymphocytes but not for monocytes or neutrophils. In thymus, mediates medullary accumulation of thymic dendritic cells and contributes to regulatoy T cell development, playing a role in self-tolerance establishment.</text>
</comment>
<comment type="interaction">
    <interactant intactId="EBI-10209901">
        <id>P47992</id>
    </interactant>
    <interactant intactId="EBI-725342">
        <id>Q99616</id>
        <label>CCL13</label>
    </interactant>
    <organismsDiffer>false</organismsDiffer>
    <experiments>2</experiments>
</comment>
<comment type="interaction">
    <interactant intactId="EBI-10209901">
        <id>P47992</id>
    </interactant>
    <interactant intactId="EBI-7783416">
        <id>Q9Y258</id>
        <label>CCL26</label>
    </interactant>
    <organismsDiffer>false</organismsDiffer>
    <experiments>2</experiments>
</comment>
<comment type="interaction">
    <interactant intactId="EBI-10209901">
        <id>P47992</id>
    </interactant>
    <interactant intactId="EBI-2848366">
        <id>P13501</id>
        <label>CCL5</label>
    </interactant>
    <organismsDiffer>false</organismsDiffer>
    <experiments>3</experiments>
</comment>
<comment type="interaction">
    <interactant intactId="EBI-10209901">
        <id>P47992</id>
    </interactant>
    <interactant intactId="EBI-3913254">
        <id>P48061</id>
        <label>CXCL12</label>
    </interactant>
    <organismsDiffer>false</organismsDiffer>
    <experiments>2</experiments>
</comment>
<comment type="interaction">
    <interactant intactId="EBI-10209901">
        <id>P47992</id>
    </interactant>
    <interactant intactId="EBI-2565740">
        <id>P02776</id>
        <label>PF4</label>
    </interactant>
    <organismsDiffer>false</organismsDiffer>
    <experiments>2</experiments>
</comment>
<comment type="interaction">
    <interactant intactId="EBI-10209901">
        <id>P47992</id>
    </interactant>
    <interactant intactId="EBI-1223944">
        <id>P10720</id>
        <label>PF4V1</label>
    </interactant>
    <organismsDiffer>false</organismsDiffer>
    <experiments>2</experiments>
</comment>
<comment type="subcellular location">
    <subcellularLocation>
        <location>Secreted</location>
    </subcellularLocation>
</comment>
<comment type="tissue specificity">
    <text>Highest level in spleen, lower in peripheral leukocytes and very low levels in lung, colon and small intestine.</text>
</comment>
<comment type="similarity">
    <text evidence="5">Belongs to the intercrine gamma family.</text>
</comment>
<comment type="online information" name="Wikipedia">
    <link uri="https://en.wikipedia.org/wiki/XCL1"/>
    <text>XCL1 entry</text>
</comment>
<accession>P47992</accession>
<accession>Q52MA8</accession>
<reference key="1">
    <citation type="journal article" date="1995" name="J. Immunol.">
        <title>Molecular cloning and functional characterization of human lymphotactin.</title>
        <authorList>
            <person name="Kennedy J."/>
            <person name="Kelner G.S."/>
            <person name="Kleyensteuber S."/>
            <person name="Schall T.J."/>
            <person name="Weiss M.C."/>
            <person name="Yssel H."/>
            <person name="Schneider P.V."/>
            <person name="Cocks B.G."/>
            <person name="Bacon K.B."/>
            <person name="Zlotnik A."/>
        </authorList>
    </citation>
    <scope>NUCLEOTIDE SEQUENCE [MRNA]</scope>
</reference>
<reference key="2">
    <citation type="journal article" date="1995" name="FEBS Lett.">
        <title>Molecular cloning of a novel C or gamma type chemokine, SCM-1.</title>
        <authorList>
            <person name="Yoshida T."/>
            <person name="Imai T."/>
            <person name="Kakizaki M."/>
            <person name="Nishimura M."/>
            <person name="Yoshie O."/>
        </authorList>
    </citation>
    <scope>NUCLEOTIDE SEQUENCE [MRNA]</scope>
    <source>
        <tissue>Peripheral blood</tissue>
    </source>
</reference>
<reference key="3">
    <citation type="journal article" date="1995" name="Eur. J. Immunol.">
        <title>Cloning of ATAC, an activation-induced, chemokine-related molecule exclusively expressed in CD8+ T lymphocytes.</title>
        <authorList>
            <person name="Mueller S."/>
            <person name="Dorner B."/>
            <person name="Korthauer U."/>
            <person name="Mages H.W."/>
            <person name="D'Apuzzo M."/>
            <person name="Senger G."/>
            <person name="Kroczek R.A."/>
        </authorList>
    </citation>
    <scope>NUCLEOTIDE SEQUENCE [MRNA]</scope>
    <source>
        <tissue>Peripheral blood</tissue>
    </source>
</reference>
<reference key="4">
    <citation type="journal article" date="1996" name="FEBS Lett.">
        <title>Structure and expression of two highly related genes encoding SCM-1/human lymphotactin.</title>
        <authorList>
            <person name="Yoshida T."/>
            <person name="Imai T."/>
            <person name="Takagi S."/>
            <person name="Nishimura M."/>
            <person name="Ishikawa I."/>
            <person name="Yaoi T."/>
            <person name="Yoshie O."/>
        </authorList>
    </citation>
    <scope>NUCLEOTIDE SEQUENCE [GENOMIC DNA]</scope>
    <source>
        <tissue>Placenta</tissue>
    </source>
</reference>
<reference key="5">
    <citation type="journal article" date="2006" name="Nature">
        <title>The DNA sequence and biological annotation of human chromosome 1.</title>
        <authorList>
            <person name="Gregory S.G."/>
            <person name="Barlow K.F."/>
            <person name="McLay K.E."/>
            <person name="Kaul R."/>
            <person name="Swarbreck D."/>
            <person name="Dunham A."/>
            <person name="Scott C.E."/>
            <person name="Howe K.L."/>
            <person name="Woodfine K."/>
            <person name="Spencer C.C.A."/>
            <person name="Jones M.C."/>
            <person name="Gillson C."/>
            <person name="Searle S."/>
            <person name="Zhou Y."/>
            <person name="Kokocinski F."/>
            <person name="McDonald L."/>
            <person name="Evans R."/>
            <person name="Phillips K."/>
            <person name="Atkinson A."/>
            <person name="Cooper R."/>
            <person name="Jones C."/>
            <person name="Hall R.E."/>
            <person name="Andrews T.D."/>
            <person name="Lloyd C."/>
            <person name="Ainscough R."/>
            <person name="Almeida J.P."/>
            <person name="Ambrose K.D."/>
            <person name="Anderson F."/>
            <person name="Andrew R.W."/>
            <person name="Ashwell R.I.S."/>
            <person name="Aubin K."/>
            <person name="Babbage A.K."/>
            <person name="Bagguley C.L."/>
            <person name="Bailey J."/>
            <person name="Beasley H."/>
            <person name="Bethel G."/>
            <person name="Bird C.P."/>
            <person name="Bray-Allen S."/>
            <person name="Brown J.Y."/>
            <person name="Brown A.J."/>
            <person name="Buckley D."/>
            <person name="Burton J."/>
            <person name="Bye J."/>
            <person name="Carder C."/>
            <person name="Chapman J.C."/>
            <person name="Clark S.Y."/>
            <person name="Clarke G."/>
            <person name="Clee C."/>
            <person name="Cobley V."/>
            <person name="Collier R.E."/>
            <person name="Corby N."/>
            <person name="Coville G.J."/>
            <person name="Davies J."/>
            <person name="Deadman R."/>
            <person name="Dunn M."/>
            <person name="Earthrowl M."/>
            <person name="Ellington A.G."/>
            <person name="Errington H."/>
            <person name="Frankish A."/>
            <person name="Frankland J."/>
            <person name="French L."/>
            <person name="Garner P."/>
            <person name="Garnett J."/>
            <person name="Gay L."/>
            <person name="Ghori M.R.J."/>
            <person name="Gibson R."/>
            <person name="Gilby L.M."/>
            <person name="Gillett W."/>
            <person name="Glithero R.J."/>
            <person name="Grafham D.V."/>
            <person name="Griffiths C."/>
            <person name="Griffiths-Jones S."/>
            <person name="Grocock R."/>
            <person name="Hammond S."/>
            <person name="Harrison E.S.I."/>
            <person name="Hart E."/>
            <person name="Haugen E."/>
            <person name="Heath P.D."/>
            <person name="Holmes S."/>
            <person name="Holt K."/>
            <person name="Howden P.J."/>
            <person name="Hunt A.R."/>
            <person name="Hunt S.E."/>
            <person name="Hunter G."/>
            <person name="Isherwood J."/>
            <person name="James R."/>
            <person name="Johnson C."/>
            <person name="Johnson D."/>
            <person name="Joy A."/>
            <person name="Kay M."/>
            <person name="Kershaw J.K."/>
            <person name="Kibukawa M."/>
            <person name="Kimberley A.M."/>
            <person name="King A."/>
            <person name="Knights A.J."/>
            <person name="Lad H."/>
            <person name="Laird G."/>
            <person name="Lawlor S."/>
            <person name="Leongamornlert D.A."/>
            <person name="Lloyd D.M."/>
            <person name="Loveland J."/>
            <person name="Lovell J."/>
            <person name="Lush M.J."/>
            <person name="Lyne R."/>
            <person name="Martin S."/>
            <person name="Mashreghi-Mohammadi M."/>
            <person name="Matthews L."/>
            <person name="Matthews N.S.W."/>
            <person name="McLaren S."/>
            <person name="Milne S."/>
            <person name="Mistry S."/>
            <person name="Moore M.J.F."/>
            <person name="Nickerson T."/>
            <person name="O'Dell C.N."/>
            <person name="Oliver K."/>
            <person name="Palmeiri A."/>
            <person name="Palmer S.A."/>
            <person name="Parker A."/>
            <person name="Patel D."/>
            <person name="Pearce A.V."/>
            <person name="Peck A.I."/>
            <person name="Pelan S."/>
            <person name="Phelps K."/>
            <person name="Phillimore B.J."/>
            <person name="Plumb R."/>
            <person name="Rajan J."/>
            <person name="Raymond C."/>
            <person name="Rouse G."/>
            <person name="Saenphimmachak C."/>
            <person name="Sehra H.K."/>
            <person name="Sheridan E."/>
            <person name="Shownkeen R."/>
            <person name="Sims S."/>
            <person name="Skuce C.D."/>
            <person name="Smith M."/>
            <person name="Steward C."/>
            <person name="Subramanian S."/>
            <person name="Sycamore N."/>
            <person name="Tracey A."/>
            <person name="Tromans A."/>
            <person name="Van Helmond Z."/>
            <person name="Wall M."/>
            <person name="Wallis J.M."/>
            <person name="White S."/>
            <person name="Whitehead S.L."/>
            <person name="Wilkinson J.E."/>
            <person name="Willey D.L."/>
            <person name="Williams H."/>
            <person name="Wilming L."/>
            <person name="Wray P.W."/>
            <person name="Wu Z."/>
            <person name="Coulson A."/>
            <person name="Vaudin M."/>
            <person name="Sulston J.E."/>
            <person name="Durbin R.M."/>
            <person name="Hubbard T."/>
            <person name="Wooster R."/>
            <person name="Dunham I."/>
            <person name="Carter N.P."/>
            <person name="McVean G."/>
            <person name="Ross M.T."/>
            <person name="Harrow J."/>
            <person name="Olson M.V."/>
            <person name="Beck S."/>
            <person name="Rogers J."/>
            <person name="Bentley D.R."/>
        </authorList>
    </citation>
    <scope>NUCLEOTIDE SEQUENCE [LARGE SCALE GENOMIC DNA]</scope>
</reference>
<reference key="6">
    <citation type="journal article" date="2004" name="Genome Res.">
        <title>The status, quality, and expansion of the NIH full-length cDNA project: the Mammalian Gene Collection (MGC).</title>
        <authorList>
            <consortium name="The MGC Project Team"/>
        </authorList>
    </citation>
    <scope>NUCLEOTIDE SEQUENCE [LARGE SCALE MRNA]</scope>
    <source>
        <tissue>Blood</tissue>
    </source>
</reference>
<reference key="7">
    <citation type="journal article" date="2001" name="Biochemistry">
        <title>Monomeric solution structure of the prototypical 'C' chemokine lymphotactin.</title>
        <authorList>
            <person name="Kuloglu E.S."/>
            <person name="McCaslin D.R."/>
            <person name="Kitabwalla M."/>
            <person name="Pauza C.D."/>
            <person name="Markley J.L."/>
            <person name="Volkman B.F."/>
        </authorList>
    </citation>
    <scope>STRUCTURE BY NMR OF 22-114</scope>
    <scope>DISULFIDE BOND</scope>
</reference>
<evidence type="ECO:0000250" key="1">
    <source>
        <dbReference type="UniProtKB" id="P47993"/>
    </source>
</evidence>
<evidence type="ECO:0000255" key="2"/>
<evidence type="ECO:0000256" key="3">
    <source>
        <dbReference type="SAM" id="MobiDB-lite"/>
    </source>
</evidence>
<evidence type="ECO:0000269" key="4">
    <source>
    </source>
</evidence>
<evidence type="ECO:0000305" key="5"/>
<evidence type="ECO:0007829" key="6">
    <source>
        <dbReference type="PDB" id="1J8I"/>
    </source>
</evidence>
<evidence type="ECO:0007829" key="7">
    <source>
        <dbReference type="PDB" id="2NYZ"/>
    </source>
</evidence>
<keyword id="KW-0002">3D-structure</keyword>
<keyword id="KW-0145">Chemotaxis</keyword>
<keyword id="KW-0202">Cytokine</keyword>
<keyword id="KW-1015">Disulfide bond</keyword>
<keyword id="KW-1185">Reference proteome</keyword>
<keyword id="KW-0964">Secreted</keyword>
<keyword id="KW-0732">Signal</keyword>
<sequence length="114" mass="12517">MRLLILALLGICSLTAYIVEGVGSEVSDKRTCVSLTTQRLPVSRIKTYTITEGSLRAVIFITKRGLKVCADPQATWVRDVVRSMDRKSNTRNNMIQTKPTGTQQSTNTAVTLTG</sequence>
<name>XCL1_HUMAN</name>
<gene>
    <name type="primary">XCL1</name>
    <name type="synonym">LTN</name>
    <name type="synonym">SCYC1</name>
</gene>
<feature type="signal peptide" evidence="2">
    <location>
        <begin position="1"/>
        <end position="21"/>
    </location>
</feature>
<feature type="chain" id="PRO_0000005248" description="Lymphotactin">
    <location>
        <begin position="22"/>
        <end position="114"/>
    </location>
</feature>
<feature type="region of interest" description="Disordered" evidence="3">
    <location>
        <begin position="91"/>
        <end position="114"/>
    </location>
</feature>
<feature type="disulfide bond" evidence="4">
    <location>
        <begin position="32"/>
        <end position="69"/>
    </location>
</feature>
<feature type="strand" evidence="6">
    <location>
        <begin position="33"/>
        <end position="35"/>
    </location>
</feature>
<feature type="helix" evidence="7">
    <location>
        <begin position="42"/>
        <end position="44"/>
    </location>
</feature>
<feature type="strand" evidence="6">
    <location>
        <begin position="45"/>
        <end position="50"/>
    </location>
</feature>
<feature type="strand" evidence="7">
    <location>
        <begin position="53"/>
        <end position="55"/>
    </location>
</feature>
<feature type="strand" evidence="7">
    <location>
        <begin position="57"/>
        <end position="62"/>
    </location>
</feature>
<feature type="strand" evidence="7">
    <location>
        <begin position="65"/>
        <end position="70"/>
    </location>
</feature>
<feature type="strand" evidence="7">
    <location>
        <begin position="72"/>
        <end position="74"/>
    </location>
</feature>
<feature type="helix" evidence="7">
    <location>
        <begin position="75"/>
        <end position="82"/>
    </location>
</feature>
<feature type="helix" evidence="7">
    <location>
        <begin position="85"/>
        <end position="87"/>
    </location>
</feature>
<feature type="turn" evidence="6">
    <location>
        <begin position="88"/>
        <end position="91"/>
    </location>
</feature>
<dbReference type="EMBL" id="U23772">
    <property type="protein sequence ID" value="AAC50164.1"/>
    <property type="molecule type" value="mRNA"/>
</dbReference>
<dbReference type="EMBL" id="D43768">
    <property type="protein sequence ID" value="BAA07825.1"/>
    <property type="molecule type" value="mRNA"/>
</dbReference>
<dbReference type="EMBL" id="X86474">
    <property type="protein sequence ID" value="CAA60198.1"/>
    <property type="molecule type" value="mRNA"/>
</dbReference>
<dbReference type="EMBL" id="D63790">
    <property type="protein sequence ID" value="BAA09859.1"/>
    <property type="molecule type" value="Genomic_DNA"/>
</dbReference>
<dbReference type="EMBL" id="AL031736">
    <property type="status" value="NOT_ANNOTATED_CDS"/>
    <property type="molecule type" value="Genomic_DNA"/>
</dbReference>
<dbReference type="EMBL" id="BC069817">
    <property type="protein sequence ID" value="AAH69817.1"/>
    <property type="molecule type" value="mRNA"/>
</dbReference>
<dbReference type="EMBL" id="BC070309">
    <property type="protein sequence ID" value="AAH70309.1"/>
    <property type="molecule type" value="mRNA"/>
</dbReference>
<dbReference type="CCDS" id="CCDS1274.1"/>
<dbReference type="PIR" id="S60650">
    <property type="entry name" value="ETHUL"/>
</dbReference>
<dbReference type="RefSeq" id="NP_002986.1">
    <property type="nucleotide sequence ID" value="NM_002995.3"/>
</dbReference>
<dbReference type="RefSeq" id="XP_011508167.1">
    <property type="nucleotide sequence ID" value="XM_011509865.2"/>
</dbReference>
<dbReference type="RefSeq" id="XP_054194116.1">
    <property type="nucleotide sequence ID" value="XM_054338141.1"/>
</dbReference>
<dbReference type="PDB" id="1J8I">
    <property type="method" value="NMR"/>
    <property type="chains" value="A=22-114"/>
</dbReference>
<dbReference type="PDB" id="1J9O">
    <property type="method" value="NMR"/>
    <property type="chains" value="A=22-114"/>
</dbReference>
<dbReference type="PDB" id="2HDM">
    <property type="method" value="NMR"/>
    <property type="chains" value="A=23-114"/>
</dbReference>
<dbReference type="PDB" id="2JP1">
    <property type="method" value="NMR"/>
    <property type="chains" value="A/B=22-114"/>
</dbReference>
<dbReference type="PDB" id="2N54">
    <property type="method" value="NMR"/>
    <property type="chains" value="A/B=22-114"/>
</dbReference>
<dbReference type="PDB" id="2NYZ">
    <property type="method" value="X-ray"/>
    <property type="resolution" value="2.60 A"/>
    <property type="chains" value="D/E=22-114"/>
</dbReference>
<dbReference type="PDB" id="9AST">
    <property type="method" value="EM"/>
    <property type="resolution" value="3.07 A"/>
    <property type="chains" value="L=22-114"/>
</dbReference>
<dbReference type="PDBsum" id="1J8I"/>
<dbReference type="PDBsum" id="1J9O"/>
<dbReference type="PDBsum" id="2HDM"/>
<dbReference type="PDBsum" id="2JP1"/>
<dbReference type="PDBsum" id="2N54"/>
<dbReference type="PDBsum" id="2NYZ"/>
<dbReference type="PDBsum" id="9AST"/>
<dbReference type="BMRB" id="P47992"/>
<dbReference type="EMDB" id="EMD-43825"/>
<dbReference type="SMR" id="P47992"/>
<dbReference type="BioGRID" id="112277">
    <property type="interactions" value="25"/>
</dbReference>
<dbReference type="DIP" id="DIP-29876N"/>
<dbReference type="FunCoup" id="P47992">
    <property type="interactions" value="622"/>
</dbReference>
<dbReference type="IntAct" id="P47992">
    <property type="interactions" value="26"/>
</dbReference>
<dbReference type="STRING" id="9606.ENSP00000356792"/>
<dbReference type="MoonDB" id="P47992">
    <property type="type" value="Curated"/>
</dbReference>
<dbReference type="MoonProt" id="P47992"/>
<dbReference type="GlyGen" id="P47992">
    <property type="glycosylation" value="3 sites, 1 O-linked glycan (1 site)"/>
</dbReference>
<dbReference type="PhosphoSitePlus" id="P47992"/>
<dbReference type="BioMuta" id="XCL1"/>
<dbReference type="DMDM" id="1346471"/>
<dbReference type="MassIVE" id="P47992"/>
<dbReference type="PaxDb" id="9606-ENSP00000356792"/>
<dbReference type="PeptideAtlas" id="P47992"/>
<dbReference type="Antibodypedia" id="20539">
    <property type="antibodies" value="435 antibodies from 34 providers"/>
</dbReference>
<dbReference type="DNASU" id="6375"/>
<dbReference type="Ensembl" id="ENST00000367818.4">
    <property type="protein sequence ID" value="ENSP00000356792.3"/>
    <property type="gene ID" value="ENSG00000143184.5"/>
</dbReference>
<dbReference type="GeneID" id="6375"/>
<dbReference type="KEGG" id="hsa:6375"/>
<dbReference type="MANE-Select" id="ENST00000367818.4">
    <property type="protein sequence ID" value="ENSP00000356792.3"/>
    <property type="RefSeq nucleotide sequence ID" value="NM_002995.3"/>
    <property type="RefSeq protein sequence ID" value="NP_002986.1"/>
</dbReference>
<dbReference type="UCSC" id="uc001gfo.2">
    <property type="organism name" value="human"/>
</dbReference>
<dbReference type="AGR" id="HGNC:10645"/>
<dbReference type="CTD" id="6375"/>
<dbReference type="DisGeNET" id="6375"/>
<dbReference type="GeneCards" id="XCL1"/>
<dbReference type="HGNC" id="HGNC:10645">
    <property type="gene designation" value="XCL1"/>
</dbReference>
<dbReference type="HPA" id="ENSG00000143184">
    <property type="expression patterns" value="Tissue enhanced (lymphoid)"/>
</dbReference>
<dbReference type="MIM" id="600250">
    <property type="type" value="gene"/>
</dbReference>
<dbReference type="neXtProt" id="NX_P47992"/>
<dbReference type="OpenTargets" id="ENSG00000143184"/>
<dbReference type="PharmGKB" id="PA35575"/>
<dbReference type="VEuPathDB" id="HostDB:ENSG00000143184"/>
<dbReference type="eggNOG" id="ENOG502S6ZP">
    <property type="taxonomic scope" value="Eukaryota"/>
</dbReference>
<dbReference type="GeneTree" id="ENSGT01130000278316"/>
<dbReference type="HOGENOM" id="CLU_141716_2_0_1"/>
<dbReference type="InParanoid" id="P47992"/>
<dbReference type="OMA" id="IPHPPRK"/>
<dbReference type="OrthoDB" id="9906867at2759"/>
<dbReference type="PAN-GO" id="P47992">
    <property type="GO annotations" value="15 GO annotations based on evolutionary models"/>
</dbReference>
<dbReference type="PhylomeDB" id="P47992"/>
<dbReference type="TreeFam" id="TF334888"/>
<dbReference type="PathwayCommons" id="P47992"/>
<dbReference type="Reactome" id="R-HSA-380108">
    <property type="pathway name" value="Chemokine receptors bind chemokines"/>
</dbReference>
<dbReference type="Reactome" id="R-HSA-416476">
    <property type="pathway name" value="G alpha (q) signalling events"/>
</dbReference>
<dbReference type="SignaLink" id="P47992"/>
<dbReference type="SIGNOR" id="P47992"/>
<dbReference type="BioGRID-ORCS" id="6375">
    <property type="hits" value="75 hits in 1032 CRISPR screens"/>
</dbReference>
<dbReference type="EvolutionaryTrace" id="P47992"/>
<dbReference type="GenomeRNAi" id="6375"/>
<dbReference type="Pharos" id="P47992">
    <property type="development level" value="Tbio"/>
</dbReference>
<dbReference type="PRO" id="PR:P47992"/>
<dbReference type="Proteomes" id="UP000005640">
    <property type="component" value="Chromosome 1"/>
</dbReference>
<dbReference type="RNAct" id="P47992">
    <property type="molecule type" value="protein"/>
</dbReference>
<dbReference type="Bgee" id="ENSG00000143184">
    <property type="expression patterns" value="Expressed in granulocyte and 84 other cell types or tissues"/>
</dbReference>
<dbReference type="GO" id="GO:0005576">
    <property type="term" value="C:extracellular region"/>
    <property type="evidence" value="ECO:0000304"/>
    <property type="project" value="Reactome"/>
</dbReference>
<dbReference type="GO" id="GO:0005615">
    <property type="term" value="C:extracellular space"/>
    <property type="evidence" value="ECO:0000250"/>
    <property type="project" value="BHF-UCL"/>
</dbReference>
<dbReference type="GO" id="GO:0048020">
    <property type="term" value="F:CCR chemokine receptor binding"/>
    <property type="evidence" value="ECO:0000318"/>
    <property type="project" value="GO_Central"/>
</dbReference>
<dbReference type="GO" id="GO:0008009">
    <property type="term" value="F:chemokine activity"/>
    <property type="evidence" value="ECO:0000314"/>
    <property type="project" value="BHF-UCL"/>
</dbReference>
<dbReference type="GO" id="GO:0042379">
    <property type="term" value="F:chemokine receptor binding"/>
    <property type="evidence" value="ECO:0000314"/>
    <property type="project" value="BHF-UCL"/>
</dbReference>
<dbReference type="GO" id="GO:0042803">
    <property type="term" value="F:protein homodimerization activity"/>
    <property type="evidence" value="ECO:0000314"/>
    <property type="project" value="BHF-UCL"/>
</dbReference>
<dbReference type="GO" id="GO:0061844">
    <property type="term" value="P:antimicrobial humoral immune response mediated by antimicrobial peptide"/>
    <property type="evidence" value="ECO:0000318"/>
    <property type="project" value="GO_Central"/>
</dbReference>
<dbReference type="GO" id="GO:0060326">
    <property type="term" value="P:cell chemotaxis"/>
    <property type="evidence" value="ECO:0000318"/>
    <property type="project" value="GO_Central"/>
</dbReference>
<dbReference type="GO" id="GO:0007267">
    <property type="term" value="P:cell-cell signaling"/>
    <property type="evidence" value="ECO:0000314"/>
    <property type="project" value="BHF-UCL"/>
</dbReference>
<dbReference type="GO" id="GO:0071353">
    <property type="term" value="P:cellular response to interleukin-4"/>
    <property type="evidence" value="ECO:0000250"/>
    <property type="project" value="BHF-UCL"/>
</dbReference>
<dbReference type="GO" id="GO:0071560">
    <property type="term" value="P:cellular response to transforming growth factor beta stimulus"/>
    <property type="evidence" value="ECO:0000250"/>
    <property type="project" value="BHF-UCL"/>
</dbReference>
<dbReference type="GO" id="GO:0070098">
    <property type="term" value="P:chemokine-mediated signaling pathway"/>
    <property type="evidence" value="ECO:0000318"/>
    <property type="project" value="GO_Central"/>
</dbReference>
<dbReference type="GO" id="GO:0006954">
    <property type="term" value="P:inflammatory response"/>
    <property type="evidence" value="ECO:0000318"/>
    <property type="project" value="GO_Central"/>
</dbReference>
<dbReference type="GO" id="GO:0035782">
    <property type="term" value="P:mature natural killer cell chemotaxis"/>
    <property type="evidence" value="ECO:0000314"/>
    <property type="project" value="BHF-UCL"/>
</dbReference>
<dbReference type="GO" id="GO:2000562">
    <property type="term" value="P:negative regulation of CD4-positive, alpha-beta T cell proliferation"/>
    <property type="evidence" value="ECO:0000314"/>
    <property type="project" value="BHF-UCL"/>
</dbReference>
<dbReference type="GO" id="GO:0045892">
    <property type="term" value="P:negative regulation of DNA-templated transcription"/>
    <property type="evidence" value="ECO:0000314"/>
    <property type="project" value="BHF-UCL"/>
</dbReference>
<dbReference type="GO" id="GO:0032703">
    <property type="term" value="P:negative regulation of interleukin-2 production"/>
    <property type="evidence" value="ECO:0000314"/>
    <property type="project" value="BHF-UCL"/>
</dbReference>
<dbReference type="GO" id="GO:0002725">
    <property type="term" value="P:negative regulation of T cell cytokine production"/>
    <property type="evidence" value="ECO:0000314"/>
    <property type="project" value="BHF-UCL"/>
</dbReference>
<dbReference type="GO" id="GO:2000518">
    <property type="term" value="P:negative regulation of T-helper 1 cell activation"/>
    <property type="evidence" value="ECO:0000314"/>
    <property type="project" value="BHF-UCL"/>
</dbReference>
<dbReference type="GO" id="GO:0002826">
    <property type="term" value="P:negative regulation of T-helper 1 type immune response"/>
    <property type="evidence" value="ECO:0000305"/>
    <property type="project" value="BHF-UCL"/>
</dbReference>
<dbReference type="GO" id="GO:0032689">
    <property type="term" value="P:negative regulation of type II interferon production"/>
    <property type="evidence" value="ECO:0000314"/>
    <property type="project" value="BHF-UCL"/>
</dbReference>
<dbReference type="GO" id="GO:0030593">
    <property type="term" value="P:neutrophil chemotaxis"/>
    <property type="evidence" value="ECO:0000304"/>
    <property type="project" value="BHF-UCL"/>
</dbReference>
<dbReference type="GO" id="GO:2000538">
    <property type="term" value="P:positive regulation of B cell chemotaxis"/>
    <property type="evidence" value="ECO:0000250"/>
    <property type="project" value="BHF-UCL"/>
</dbReference>
<dbReference type="GO" id="GO:2000563">
    <property type="term" value="P:positive regulation of CD4-positive, alpha-beta T cell proliferation"/>
    <property type="evidence" value="ECO:0000250"/>
    <property type="project" value="BHF-UCL"/>
</dbReference>
<dbReference type="GO" id="GO:2000566">
    <property type="term" value="P:positive regulation of CD8-positive, alpha-beta T cell proliferation"/>
    <property type="evidence" value="ECO:0000314"/>
    <property type="project" value="BHF-UCL"/>
</dbReference>
<dbReference type="GO" id="GO:0030335">
    <property type="term" value="P:positive regulation of cell migration"/>
    <property type="evidence" value="ECO:0000318"/>
    <property type="project" value="GO_Central"/>
</dbReference>
<dbReference type="GO" id="GO:2000513">
    <property type="term" value="P:positive regulation of granzyme A production"/>
    <property type="evidence" value="ECO:0000314"/>
    <property type="project" value="BHF-UCL"/>
</dbReference>
<dbReference type="GO" id="GO:0071663">
    <property type="term" value="P:positive regulation of granzyme B production"/>
    <property type="evidence" value="ECO:0000314"/>
    <property type="project" value="BHF-UCL"/>
</dbReference>
<dbReference type="GO" id="GO:2000558">
    <property type="term" value="P:positive regulation of immunoglobulin production in mucosal tissue"/>
    <property type="evidence" value="ECO:0000250"/>
    <property type="project" value="BHF-UCL"/>
</dbReference>
<dbReference type="GO" id="GO:0032733">
    <property type="term" value="P:positive regulation of interleukin-10 production"/>
    <property type="evidence" value="ECO:0000314"/>
    <property type="project" value="BHF-UCL"/>
</dbReference>
<dbReference type="GO" id="GO:0002690">
    <property type="term" value="P:positive regulation of leukocyte chemotaxis"/>
    <property type="evidence" value="ECO:0000250"/>
    <property type="project" value="BHF-UCL"/>
</dbReference>
<dbReference type="GO" id="GO:2000503">
    <property type="term" value="P:positive regulation of natural killer cell chemotaxis"/>
    <property type="evidence" value="ECO:0000314"/>
    <property type="project" value="BHF-UCL"/>
</dbReference>
<dbReference type="GO" id="GO:0090023">
    <property type="term" value="P:positive regulation of neutrophil chemotaxis"/>
    <property type="evidence" value="ECO:0000250"/>
    <property type="project" value="BHF-UCL"/>
</dbReference>
<dbReference type="GO" id="GO:0051281">
    <property type="term" value="P:positive regulation of release of sequestered calcium ion into cytosol"/>
    <property type="evidence" value="ECO:0000314"/>
    <property type="project" value="BHF-UCL"/>
</dbReference>
<dbReference type="GO" id="GO:0010820">
    <property type="term" value="P:positive regulation of T cell chemotaxis"/>
    <property type="evidence" value="ECO:0000314"/>
    <property type="project" value="BHF-UCL"/>
</dbReference>
<dbReference type="GO" id="GO:0002726">
    <property type="term" value="P:positive regulation of T cell cytokine production"/>
    <property type="evidence" value="ECO:0000250"/>
    <property type="project" value="BHF-UCL"/>
</dbReference>
<dbReference type="GO" id="GO:0001916">
    <property type="term" value="P:positive regulation of T cell mediated cytotoxicity"/>
    <property type="evidence" value="ECO:0000314"/>
    <property type="project" value="BHF-UCL"/>
</dbReference>
<dbReference type="GO" id="GO:2000556">
    <property type="term" value="P:positive regulation of T-helper 1 cell cytokine production"/>
    <property type="evidence" value="ECO:0000250"/>
    <property type="project" value="BHF-UCL"/>
</dbReference>
<dbReference type="GO" id="GO:2000553">
    <property type="term" value="P:positive regulation of T-helper 2 cell cytokine production"/>
    <property type="evidence" value="ECO:0000250"/>
    <property type="project" value="BHF-UCL"/>
</dbReference>
<dbReference type="GO" id="GO:2000412">
    <property type="term" value="P:positive regulation of thymocyte migration"/>
    <property type="evidence" value="ECO:0000250"/>
    <property type="project" value="BHF-UCL"/>
</dbReference>
<dbReference type="GO" id="GO:0045944">
    <property type="term" value="P:positive regulation of transcription by RNA polymerase II"/>
    <property type="evidence" value="ECO:0000314"/>
    <property type="project" value="BHF-UCL"/>
</dbReference>
<dbReference type="GO" id="GO:0071636">
    <property type="term" value="P:positive regulation of transforming growth factor beta production"/>
    <property type="evidence" value="ECO:0000314"/>
    <property type="project" value="BHF-UCL"/>
</dbReference>
<dbReference type="GO" id="GO:0050727">
    <property type="term" value="P:regulation of inflammatory response"/>
    <property type="evidence" value="ECO:0000314"/>
    <property type="project" value="BHF-UCL"/>
</dbReference>
<dbReference type="GO" id="GO:0051209">
    <property type="term" value="P:release of sequestered calcium ion into cytosol"/>
    <property type="evidence" value="ECO:0000250"/>
    <property type="project" value="BHF-UCL"/>
</dbReference>
<dbReference type="GO" id="GO:0009615">
    <property type="term" value="P:response to virus"/>
    <property type="evidence" value="ECO:0000314"/>
    <property type="project" value="BHF-UCL"/>
</dbReference>
<dbReference type="GO" id="GO:0007165">
    <property type="term" value="P:signal transduction"/>
    <property type="evidence" value="ECO:0000305"/>
    <property type="project" value="BHF-UCL"/>
</dbReference>
<dbReference type="CDD" id="cd00271">
    <property type="entry name" value="Chemokine_C"/>
    <property type="match status" value="1"/>
</dbReference>
<dbReference type="DisProt" id="DP02957"/>
<dbReference type="FunFam" id="2.40.50.40:FF:000023">
    <property type="entry name" value="Lymphotactin isoform X1"/>
    <property type="match status" value="1"/>
</dbReference>
<dbReference type="Gene3D" id="2.40.50.40">
    <property type="match status" value="1"/>
</dbReference>
<dbReference type="InterPro" id="IPR039809">
    <property type="entry name" value="Chemokine_b/g/d"/>
</dbReference>
<dbReference type="InterPro" id="IPR001811">
    <property type="entry name" value="Chemokine_IL8-like_dom"/>
</dbReference>
<dbReference type="InterPro" id="IPR008105">
    <property type="entry name" value="Chemokine_XCL1/XCL2"/>
</dbReference>
<dbReference type="InterPro" id="IPR036048">
    <property type="entry name" value="Interleukin_8-like_sf"/>
</dbReference>
<dbReference type="PANTHER" id="PTHR12015:SF101">
    <property type="entry name" value="CYTOKINE SCM-1 BETA-RELATED"/>
    <property type="match status" value="1"/>
</dbReference>
<dbReference type="PANTHER" id="PTHR12015">
    <property type="entry name" value="SMALL INDUCIBLE CYTOKINE A"/>
    <property type="match status" value="1"/>
</dbReference>
<dbReference type="Pfam" id="PF00048">
    <property type="entry name" value="IL8"/>
    <property type="match status" value="1"/>
</dbReference>
<dbReference type="PRINTS" id="PR01731">
    <property type="entry name" value="LYMPHOTACTIN"/>
</dbReference>
<dbReference type="SMART" id="SM00199">
    <property type="entry name" value="SCY"/>
    <property type="match status" value="1"/>
</dbReference>
<dbReference type="SUPFAM" id="SSF54117">
    <property type="entry name" value="Interleukin 8-like chemokines"/>
    <property type="match status" value="1"/>
</dbReference>
<proteinExistence type="evidence at protein level"/>
<organism>
    <name type="scientific">Homo sapiens</name>
    <name type="common">Human</name>
    <dbReference type="NCBI Taxonomy" id="9606"/>
    <lineage>
        <taxon>Eukaryota</taxon>
        <taxon>Metazoa</taxon>
        <taxon>Chordata</taxon>
        <taxon>Craniata</taxon>
        <taxon>Vertebrata</taxon>
        <taxon>Euteleostomi</taxon>
        <taxon>Mammalia</taxon>
        <taxon>Eutheria</taxon>
        <taxon>Euarchontoglires</taxon>
        <taxon>Primates</taxon>
        <taxon>Haplorrhini</taxon>
        <taxon>Catarrhini</taxon>
        <taxon>Hominidae</taxon>
        <taxon>Homo</taxon>
    </lineage>
</organism>
<protein>
    <recommendedName>
        <fullName>Lymphotactin</fullName>
    </recommendedName>
    <alternativeName>
        <fullName>ATAC</fullName>
    </alternativeName>
    <alternativeName>
        <fullName>C motif chemokine 1</fullName>
    </alternativeName>
    <alternativeName>
        <fullName>Cytokine SCM-1</fullName>
    </alternativeName>
    <alternativeName>
        <fullName>Lymphotaxin</fullName>
    </alternativeName>
    <alternativeName>
        <fullName>SCM-1-alpha</fullName>
    </alternativeName>
    <alternativeName>
        <fullName>Small-inducible cytokine C1</fullName>
    </alternativeName>
    <alternativeName>
        <fullName>XC chemokine ligand 1</fullName>
    </alternativeName>
</protein>